<feature type="chain" id="PRO_0000267604" description="Type III pantothenate kinase">
    <location>
        <begin position="1"/>
        <end position="275"/>
    </location>
</feature>
<feature type="active site" description="Proton acceptor" evidence="1">
    <location>
        <position position="110"/>
    </location>
</feature>
<feature type="binding site" evidence="1">
    <location>
        <begin position="6"/>
        <end position="13"/>
    </location>
    <ligand>
        <name>ATP</name>
        <dbReference type="ChEBI" id="CHEBI:30616"/>
    </ligand>
</feature>
<feature type="binding site" evidence="1">
    <location>
        <begin position="108"/>
        <end position="111"/>
    </location>
    <ligand>
        <name>substrate</name>
    </ligand>
</feature>
<feature type="binding site" evidence="1">
    <location>
        <position position="130"/>
    </location>
    <ligand>
        <name>K(+)</name>
        <dbReference type="ChEBI" id="CHEBI:29103"/>
    </ligand>
</feature>
<feature type="binding site" evidence="1">
    <location>
        <position position="133"/>
    </location>
    <ligand>
        <name>ATP</name>
        <dbReference type="ChEBI" id="CHEBI:30616"/>
    </ligand>
</feature>
<feature type="binding site" evidence="1">
    <location>
        <position position="187"/>
    </location>
    <ligand>
        <name>substrate</name>
    </ligand>
</feature>
<name>COAX_ZYMMO</name>
<reference key="1">
    <citation type="journal article" date="2005" name="Nat. Biotechnol.">
        <title>The genome sequence of the ethanologenic bacterium Zymomonas mobilis ZM4.</title>
        <authorList>
            <person name="Seo J.-S."/>
            <person name="Chong H."/>
            <person name="Park H.S."/>
            <person name="Yoon K.-O."/>
            <person name="Jung C."/>
            <person name="Kim J.J."/>
            <person name="Hong J.H."/>
            <person name="Kim H."/>
            <person name="Kim J.-H."/>
            <person name="Kil J.-I."/>
            <person name="Park C.J."/>
            <person name="Oh H.-M."/>
            <person name="Lee J.-S."/>
            <person name="Jin S.-J."/>
            <person name="Um H.-W."/>
            <person name="Lee H.-J."/>
            <person name="Oh S.-J."/>
            <person name="Kim J.Y."/>
            <person name="Kang H.L."/>
            <person name="Lee S.Y."/>
            <person name="Lee K.J."/>
            <person name="Kang H.S."/>
        </authorList>
    </citation>
    <scope>NUCLEOTIDE SEQUENCE [LARGE SCALE GENOMIC DNA]</scope>
    <source>
        <strain>ATCC 31821 / ZM4 / CP4</strain>
    </source>
</reference>
<evidence type="ECO:0000255" key="1">
    <source>
        <dbReference type="HAMAP-Rule" id="MF_01274"/>
    </source>
</evidence>
<comment type="function">
    <text evidence="1">Catalyzes the phosphorylation of pantothenate (Pan), the first step in CoA biosynthesis.</text>
</comment>
<comment type="catalytic activity">
    <reaction evidence="1">
        <text>(R)-pantothenate + ATP = (R)-4'-phosphopantothenate + ADP + H(+)</text>
        <dbReference type="Rhea" id="RHEA:16373"/>
        <dbReference type="ChEBI" id="CHEBI:10986"/>
        <dbReference type="ChEBI" id="CHEBI:15378"/>
        <dbReference type="ChEBI" id="CHEBI:29032"/>
        <dbReference type="ChEBI" id="CHEBI:30616"/>
        <dbReference type="ChEBI" id="CHEBI:456216"/>
        <dbReference type="EC" id="2.7.1.33"/>
    </reaction>
</comment>
<comment type="cofactor">
    <cofactor evidence="1">
        <name>NH4(+)</name>
        <dbReference type="ChEBI" id="CHEBI:28938"/>
    </cofactor>
    <cofactor evidence="1">
        <name>K(+)</name>
        <dbReference type="ChEBI" id="CHEBI:29103"/>
    </cofactor>
    <text evidence="1">A monovalent cation. Ammonium or potassium.</text>
</comment>
<comment type="pathway">
    <text evidence="1">Cofactor biosynthesis; coenzyme A biosynthesis; CoA from (R)-pantothenate: step 1/5.</text>
</comment>
<comment type="subunit">
    <text evidence="1">Homodimer.</text>
</comment>
<comment type="subcellular location">
    <subcellularLocation>
        <location evidence="1">Cytoplasm</location>
    </subcellularLocation>
</comment>
<comment type="similarity">
    <text evidence="1">Belongs to the type III pantothenate kinase family.</text>
</comment>
<keyword id="KW-0067">ATP-binding</keyword>
<keyword id="KW-0173">Coenzyme A biosynthesis</keyword>
<keyword id="KW-0963">Cytoplasm</keyword>
<keyword id="KW-0418">Kinase</keyword>
<keyword id="KW-0479">Metal-binding</keyword>
<keyword id="KW-0547">Nucleotide-binding</keyword>
<keyword id="KW-0630">Potassium</keyword>
<keyword id="KW-1185">Reference proteome</keyword>
<keyword id="KW-0808">Transferase</keyword>
<accession>Q5NLB9</accession>
<proteinExistence type="inferred from homology"/>
<organism>
    <name type="scientific">Zymomonas mobilis subsp. mobilis (strain ATCC 31821 / ZM4 / CP4)</name>
    <dbReference type="NCBI Taxonomy" id="264203"/>
    <lineage>
        <taxon>Bacteria</taxon>
        <taxon>Pseudomonadati</taxon>
        <taxon>Pseudomonadota</taxon>
        <taxon>Alphaproteobacteria</taxon>
        <taxon>Sphingomonadales</taxon>
        <taxon>Zymomonadaceae</taxon>
        <taxon>Zymomonas</taxon>
    </lineage>
</organism>
<protein>
    <recommendedName>
        <fullName evidence="1">Type III pantothenate kinase</fullName>
        <ecNumber evidence="1">2.7.1.33</ecNumber>
    </recommendedName>
    <alternativeName>
        <fullName evidence="1">PanK-III</fullName>
    </alternativeName>
    <alternativeName>
        <fullName evidence="1">Pantothenic acid kinase</fullName>
    </alternativeName>
</protein>
<sequence>MLLAIDAGNTNIVFALVDGREIRARWRIATEGRRTADEYAVWLVQLMAIGGFTREEIDSVVICTVVPRTLHNLEVLSAKYFGVKALIAGTPPLDWGIDIDVISPETVGADRLVNALAAHHLHSGHKIAIDFGTATTFDWVDEKGAYRGGIIAPGINLSLDALVGKAARLPRIAIEIPKTDSVIGRSTEESMHSGIYWGYIAMIEGLTERMKQEIGQPVTVIATGGLASLFAVHTSVFDVIEPDLTIRGMALLYEQKAPTKFTAHSGGFAADFSPL</sequence>
<gene>
    <name evidence="1" type="primary">coaX</name>
    <name type="ordered locus">ZMO1867</name>
</gene>
<dbReference type="EC" id="2.7.1.33" evidence="1"/>
<dbReference type="EMBL" id="AE008692">
    <property type="protein sequence ID" value="AAV90491.1"/>
    <property type="molecule type" value="Genomic_DNA"/>
</dbReference>
<dbReference type="RefSeq" id="WP_011241595.1">
    <property type="nucleotide sequence ID" value="NZ_CP035711.1"/>
</dbReference>
<dbReference type="SMR" id="Q5NLB9"/>
<dbReference type="STRING" id="264203.ZMO1867"/>
<dbReference type="KEGG" id="zmo:ZMO1867"/>
<dbReference type="eggNOG" id="COG1521">
    <property type="taxonomic scope" value="Bacteria"/>
</dbReference>
<dbReference type="HOGENOM" id="CLU_066627_1_0_5"/>
<dbReference type="UniPathway" id="UPA00241">
    <property type="reaction ID" value="UER00352"/>
</dbReference>
<dbReference type="Proteomes" id="UP000001173">
    <property type="component" value="Chromosome"/>
</dbReference>
<dbReference type="GO" id="GO:0005737">
    <property type="term" value="C:cytoplasm"/>
    <property type="evidence" value="ECO:0007669"/>
    <property type="project" value="UniProtKB-SubCell"/>
</dbReference>
<dbReference type="GO" id="GO:0005524">
    <property type="term" value="F:ATP binding"/>
    <property type="evidence" value="ECO:0007669"/>
    <property type="project" value="UniProtKB-UniRule"/>
</dbReference>
<dbReference type="GO" id="GO:0046872">
    <property type="term" value="F:metal ion binding"/>
    <property type="evidence" value="ECO:0007669"/>
    <property type="project" value="UniProtKB-KW"/>
</dbReference>
<dbReference type="GO" id="GO:0004594">
    <property type="term" value="F:pantothenate kinase activity"/>
    <property type="evidence" value="ECO:0007669"/>
    <property type="project" value="UniProtKB-UniRule"/>
</dbReference>
<dbReference type="GO" id="GO:0015937">
    <property type="term" value="P:coenzyme A biosynthetic process"/>
    <property type="evidence" value="ECO:0007669"/>
    <property type="project" value="UniProtKB-UniRule"/>
</dbReference>
<dbReference type="CDD" id="cd24015">
    <property type="entry name" value="ASKHA_NBD_PanK-III"/>
    <property type="match status" value="1"/>
</dbReference>
<dbReference type="Gene3D" id="3.30.420.40">
    <property type="match status" value="2"/>
</dbReference>
<dbReference type="HAMAP" id="MF_01274">
    <property type="entry name" value="Pantothen_kinase_3"/>
    <property type="match status" value="1"/>
</dbReference>
<dbReference type="InterPro" id="IPR043129">
    <property type="entry name" value="ATPase_NBD"/>
</dbReference>
<dbReference type="InterPro" id="IPR004619">
    <property type="entry name" value="Type_III_PanK"/>
</dbReference>
<dbReference type="NCBIfam" id="TIGR00671">
    <property type="entry name" value="baf"/>
    <property type="match status" value="1"/>
</dbReference>
<dbReference type="NCBIfam" id="NF009844">
    <property type="entry name" value="PRK13318.1-2"/>
    <property type="match status" value="1"/>
</dbReference>
<dbReference type="NCBIfam" id="NF009855">
    <property type="entry name" value="PRK13321.1"/>
    <property type="match status" value="1"/>
</dbReference>
<dbReference type="PANTHER" id="PTHR34265">
    <property type="entry name" value="TYPE III PANTOTHENATE KINASE"/>
    <property type="match status" value="1"/>
</dbReference>
<dbReference type="PANTHER" id="PTHR34265:SF1">
    <property type="entry name" value="TYPE III PANTOTHENATE KINASE"/>
    <property type="match status" value="1"/>
</dbReference>
<dbReference type="Pfam" id="PF03309">
    <property type="entry name" value="Pan_kinase"/>
    <property type="match status" value="1"/>
</dbReference>
<dbReference type="SUPFAM" id="SSF53067">
    <property type="entry name" value="Actin-like ATPase domain"/>
    <property type="match status" value="2"/>
</dbReference>